<dbReference type="EC" id="6.3.4.16" evidence="1"/>
<dbReference type="EC" id="6.3.5.5" evidence="1"/>
<dbReference type="EMBL" id="CP000384">
    <property type="protein sequence ID" value="ABG08475.1"/>
    <property type="molecule type" value="Genomic_DNA"/>
</dbReference>
<dbReference type="SMR" id="Q1B9F9"/>
<dbReference type="KEGG" id="mmc:Mmcs_2367"/>
<dbReference type="HOGENOM" id="CLU_000513_1_0_11"/>
<dbReference type="BioCyc" id="MSP164756:G1G6O-2419-MONOMER"/>
<dbReference type="UniPathway" id="UPA00068">
    <property type="reaction ID" value="UER00171"/>
</dbReference>
<dbReference type="UniPathway" id="UPA00070">
    <property type="reaction ID" value="UER00115"/>
</dbReference>
<dbReference type="GO" id="GO:0005737">
    <property type="term" value="C:cytoplasm"/>
    <property type="evidence" value="ECO:0007669"/>
    <property type="project" value="TreeGrafter"/>
</dbReference>
<dbReference type="GO" id="GO:0005524">
    <property type="term" value="F:ATP binding"/>
    <property type="evidence" value="ECO:0007669"/>
    <property type="project" value="UniProtKB-UniRule"/>
</dbReference>
<dbReference type="GO" id="GO:0004087">
    <property type="term" value="F:carbamoyl-phosphate synthase (ammonia) activity"/>
    <property type="evidence" value="ECO:0007669"/>
    <property type="project" value="RHEA"/>
</dbReference>
<dbReference type="GO" id="GO:0004088">
    <property type="term" value="F:carbamoyl-phosphate synthase (glutamine-hydrolyzing) activity"/>
    <property type="evidence" value="ECO:0007669"/>
    <property type="project" value="UniProtKB-UniRule"/>
</dbReference>
<dbReference type="GO" id="GO:0046872">
    <property type="term" value="F:metal ion binding"/>
    <property type="evidence" value="ECO:0007669"/>
    <property type="project" value="UniProtKB-KW"/>
</dbReference>
<dbReference type="GO" id="GO:0044205">
    <property type="term" value="P:'de novo' UMP biosynthetic process"/>
    <property type="evidence" value="ECO:0007669"/>
    <property type="project" value="UniProtKB-UniRule"/>
</dbReference>
<dbReference type="GO" id="GO:0006541">
    <property type="term" value="P:glutamine metabolic process"/>
    <property type="evidence" value="ECO:0007669"/>
    <property type="project" value="TreeGrafter"/>
</dbReference>
<dbReference type="GO" id="GO:0006526">
    <property type="term" value="P:L-arginine biosynthetic process"/>
    <property type="evidence" value="ECO:0007669"/>
    <property type="project" value="UniProtKB-UniRule"/>
</dbReference>
<dbReference type="CDD" id="cd01424">
    <property type="entry name" value="MGS_CPS_II"/>
    <property type="match status" value="1"/>
</dbReference>
<dbReference type="FunFam" id="1.10.1030.10:FF:000002">
    <property type="entry name" value="Carbamoyl-phosphate synthase large chain"/>
    <property type="match status" value="1"/>
</dbReference>
<dbReference type="FunFam" id="3.30.1490.20:FF:000001">
    <property type="entry name" value="Carbamoyl-phosphate synthase large chain"/>
    <property type="match status" value="1"/>
</dbReference>
<dbReference type="FunFam" id="3.30.470.20:FF:000007">
    <property type="entry name" value="Carbamoyl-phosphate synthase large chain"/>
    <property type="match status" value="1"/>
</dbReference>
<dbReference type="FunFam" id="3.30.470.20:FF:000014">
    <property type="entry name" value="Carbamoyl-phosphate synthase large chain"/>
    <property type="match status" value="1"/>
</dbReference>
<dbReference type="FunFam" id="3.40.50.20:FF:000001">
    <property type="entry name" value="Carbamoyl-phosphate synthase large chain"/>
    <property type="match status" value="2"/>
</dbReference>
<dbReference type="Gene3D" id="3.40.50.20">
    <property type="match status" value="2"/>
</dbReference>
<dbReference type="Gene3D" id="3.30.1490.20">
    <property type="entry name" value="ATP-grasp fold, A domain"/>
    <property type="match status" value="1"/>
</dbReference>
<dbReference type="Gene3D" id="3.30.470.20">
    <property type="entry name" value="ATP-grasp fold, B domain"/>
    <property type="match status" value="2"/>
</dbReference>
<dbReference type="Gene3D" id="1.10.1030.10">
    <property type="entry name" value="Carbamoyl-phosphate synthetase, large subunit oligomerisation domain"/>
    <property type="match status" value="1"/>
</dbReference>
<dbReference type="Gene3D" id="3.40.50.1380">
    <property type="entry name" value="Methylglyoxal synthase-like domain"/>
    <property type="match status" value="1"/>
</dbReference>
<dbReference type="HAMAP" id="MF_01210_B">
    <property type="entry name" value="CPSase_L_chain_B"/>
    <property type="match status" value="1"/>
</dbReference>
<dbReference type="InterPro" id="IPR011761">
    <property type="entry name" value="ATP-grasp"/>
</dbReference>
<dbReference type="InterPro" id="IPR013815">
    <property type="entry name" value="ATP_grasp_subdomain_1"/>
</dbReference>
<dbReference type="InterPro" id="IPR006275">
    <property type="entry name" value="CarbamoylP_synth_lsu"/>
</dbReference>
<dbReference type="InterPro" id="IPR005480">
    <property type="entry name" value="CarbamoylP_synth_lsu_oligo"/>
</dbReference>
<dbReference type="InterPro" id="IPR036897">
    <property type="entry name" value="CarbamoylP_synth_lsu_oligo_sf"/>
</dbReference>
<dbReference type="InterPro" id="IPR005479">
    <property type="entry name" value="CbamoylP_synth_lsu-like_ATP-bd"/>
</dbReference>
<dbReference type="InterPro" id="IPR005483">
    <property type="entry name" value="CbamoylP_synth_lsu_CPSase_dom"/>
</dbReference>
<dbReference type="InterPro" id="IPR011607">
    <property type="entry name" value="MGS-like_dom"/>
</dbReference>
<dbReference type="InterPro" id="IPR036914">
    <property type="entry name" value="MGS-like_dom_sf"/>
</dbReference>
<dbReference type="InterPro" id="IPR033937">
    <property type="entry name" value="MGS_CPS_CarB"/>
</dbReference>
<dbReference type="InterPro" id="IPR016185">
    <property type="entry name" value="PreATP-grasp_dom_sf"/>
</dbReference>
<dbReference type="NCBIfam" id="TIGR01369">
    <property type="entry name" value="CPSaseII_lrg"/>
    <property type="match status" value="1"/>
</dbReference>
<dbReference type="NCBIfam" id="NF003671">
    <property type="entry name" value="PRK05294.1"/>
    <property type="match status" value="1"/>
</dbReference>
<dbReference type="NCBIfam" id="NF009455">
    <property type="entry name" value="PRK12815.1"/>
    <property type="match status" value="1"/>
</dbReference>
<dbReference type="PANTHER" id="PTHR11405:SF53">
    <property type="entry name" value="CARBAMOYL-PHOSPHATE SYNTHASE [AMMONIA], MITOCHONDRIAL"/>
    <property type="match status" value="1"/>
</dbReference>
<dbReference type="PANTHER" id="PTHR11405">
    <property type="entry name" value="CARBAMOYLTRANSFERASE FAMILY MEMBER"/>
    <property type="match status" value="1"/>
</dbReference>
<dbReference type="Pfam" id="PF02786">
    <property type="entry name" value="CPSase_L_D2"/>
    <property type="match status" value="2"/>
</dbReference>
<dbReference type="Pfam" id="PF02787">
    <property type="entry name" value="CPSase_L_D3"/>
    <property type="match status" value="1"/>
</dbReference>
<dbReference type="Pfam" id="PF02142">
    <property type="entry name" value="MGS"/>
    <property type="match status" value="1"/>
</dbReference>
<dbReference type="PRINTS" id="PR00098">
    <property type="entry name" value="CPSASE"/>
</dbReference>
<dbReference type="SMART" id="SM01096">
    <property type="entry name" value="CPSase_L_D3"/>
    <property type="match status" value="1"/>
</dbReference>
<dbReference type="SMART" id="SM00851">
    <property type="entry name" value="MGS"/>
    <property type="match status" value="1"/>
</dbReference>
<dbReference type="SUPFAM" id="SSF48108">
    <property type="entry name" value="Carbamoyl phosphate synthetase, large subunit connection domain"/>
    <property type="match status" value="1"/>
</dbReference>
<dbReference type="SUPFAM" id="SSF56059">
    <property type="entry name" value="Glutathione synthetase ATP-binding domain-like"/>
    <property type="match status" value="2"/>
</dbReference>
<dbReference type="SUPFAM" id="SSF52335">
    <property type="entry name" value="Methylglyoxal synthase-like"/>
    <property type="match status" value="1"/>
</dbReference>
<dbReference type="SUPFAM" id="SSF52440">
    <property type="entry name" value="PreATP-grasp domain"/>
    <property type="match status" value="2"/>
</dbReference>
<dbReference type="PROSITE" id="PS50975">
    <property type="entry name" value="ATP_GRASP"/>
    <property type="match status" value="2"/>
</dbReference>
<dbReference type="PROSITE" id="PS00866">
    <property type="entry name" value="CPSASE_1"/>
    <property type="match status" value="1"/>
</dbReference>
<dbReference type="PROSITE" id="PS00867">
    <property type="entry name" value="CPSASE_2"/>
    <property type="match status" value="2"/>
</dbReference>
<dbReference type="PROSITE" id="PS51855">
    <property type="entry name" value="MGS"/>
    <property type="match status" value="1"/>
</dbReference>
<comment type="function">
    <text evidence="1">Large subunit of the glutamine-dependent carbamoyl phosphate synthetase (CPSase). CPSase catalyzes the formation of carbamoyl phosphate from the ammonia moiety of glutamine, carbonate, and phosphate donated by ATP, constituting the first step of 2 biosynthetic pathways, one leading to arginine and/or urea and the other to pyrimidine nucleotides. The large subunit (synthetase) binds the substrates ammonia (free or transferred from glutamine from the small subunit), hydrogencarbonate and ATP and carries out an ATP-coupled ligase reaction, activating hydrogencarbonate by forming carboxy phosphate which reacts with ammonia to form carbamoyl phosphate.</text>
</comment>
<comment type="catalytic activity">
    <reaction evidence="1">
        <text>hydrogencarbonate + L-glutamine + 2 ATP + H2O = carbamoyl phosphate + L-glutamate + 2 ADP + phosphate + 2 H(+)</text>
        <dbReference type="Rhea" id="RHEA:18633"/>
        <dbReference type="ChEBI" id="CHEBI:15377"/>
        <dbReference type="ChEBI" id="CHEBI:15378"/>
        <dbReference type="ChEBI" id="CHEBI:17544"/>
        <dbReference type="ChEBI" id="CHEBI:29985"/>
        <dbReference type="ChEBI" id="CHEBI:30616"/>
        <dbReference type="ChEBI" id="CHEBI:43474"/>
        <dbReference type="ChEBI" id="CHEBI:58228"/>
        <dbReference type="ChEBI" id="CHEBI:58359"/>
        <dbReference type="ChEBI" id="CHEBI:456216"/>
        <dbReference type="EC" id="6.3.5.5"/>
    </reaction>
</comment>
<comment type="catalytic activity">
    <molecule>Carbamoyl phosphate synthase large chain</molecule>
    <reaction evidence="1">
        <text>hydrogencarbonate + NH4(+) + 2 ATP = carbamoyl phosphate + 2 ADP + phosphate + 2 H(+)</text>
        <dbReference type="Rhea" id="RHEA:18029"/>
        <dbReference type="ChEBI" id="CHEBI:15378"/>
        <dbReference type="ChEBI" id="CHEBI:17544"/>
        <dbReference type="ChEBI" id="CHEBI:28938"/>
        <dbReference type="ChEBI" id="CHEBI:30616"/>
        <dbReference type="ChEBI" id="CHEBI:43474"/>
        <dbReference type="ChEBI" id="CHEBI:58228"/>
        <dbReference type="ChEBI" id="CHEBI:456216"/>
        <dbReference type="EC" id="6.3.4.16"/>
    </reaction>
</comment>
<comment type="cofactor">
    <cofactor evidence="1">
        <name>Mg(2+)</name>
        <dbReference type="ChEBI" id="CHEBI:18420"/>
    </cofactor>
    <cofactor evidence="1">
        <name>Mn(2+)</name>
        <dbReference type="ChEBI" id="CHEBI:29035"/>
    </cofactor>
    <text evidence="1">Binds 4 Mg(2+) or Mn(2+) ions per subunit.</text>
</comment>
<comment type="pathway">
    <text evidence="1">Amino-acid biosynthesis; L-arginine biosynthesis; carbamoyl phosphate from bicarbonate: step 1/1.</text>
</comment>
<comment type="pathway">
    <text evidence="1">Pyrimidine metabolism; UMP biosynthesis via de novo pathway; (S)-dihydroorotate from bicarbonate: step 1/3.</text>
</comment>
<comment type="subunit">
    <text evidence="1">Composed of two chains; the small (or glutamine) chain promotes the hydrolysis of glutamine to ammonia, which is used by the large (or ammonia) chain to synthesize carbamoyl phosphate. Tetramer of heterodimers (alpha,beta)4.</text>
</comment>
<comment type="domain">
    <text evidence="1">The large subunit is composed of 2 ATP-grasp domains that are involved in binding the 2 ATP molecules needed for carbamoyl phosphate synthesis. The N-terminal ATP-grasp domain (referred to as the carboxyphosphate synthetic component) catalyzes the ATP-dependent phosphorylation of hydrogencarbonate to carboxyphosphate and the subsequent nucleophilic attack by ammonia to form a carbamate intermediate. The C-terminal ATP-grasp domain (referred to as the carbamoyl phosphate synthetic component) then catalyzes the phosphorylation of carbamate with the second ATP to form the end product carbamoyl phosphate. The reactive and unstable enzyme intermediates are sequentially channeled from one active site to the next through the interior of the protein over a distance of at least 96 A.</text>
</comment>
<comment type="similarity">
    <text evidence="1">Belongs to the CarB family.</text>
</comment>
<gene>
    <name evidence="1" type="primary">carB</name>
    <name type="ordered locus">Mmcs_2367</name>
</gene>
<accession>Q1B9F9</accession>
<proteinExistence type="inferred from homology"/>
<feature type="chain" id="PRO_1000066371" description="Carbamoyl phosphate synthase large chain">
    <location>
        <begin position="1"/>
        <end position="1112"/>
    </location>
</feature>
<feature type="domain" description="ATP-grasp 1" evidence="1">
    <location>
        <begin position="138"/>
        <end position="333"/>
    </location>
</feature>
<feature type="domain" description="ATP-grasp 2" evidence="1">
    <location>
        <begin position="693"/>
        <end position="884"/>
    </location>
</feature>
<feature type="domain" description="MGS-like" evidence="1">
    <location>
        <begin position="966"/>
        <end position="1112"/>
    </location>
</feature>
<feature type="region of interest" description="Carboxyphosphate synthetic domain" evidence="1">
    <location>
        <begin position="1"/>
        <end position="407"/>
    </location>
</feature>
<feature type="region of interest" description="Oligomerization domain" evidence="1">
    <location>
        <begin position="408"/>
        <end position="559"/>
    </location>
</feature>
<feature type="region of interest" description="Carbamoyl phosphate synthetic domain" evidence="1">
    <location>
        <begin position="560"/>
        <end position="965"/>
    </location>
</feature>
<feature type="region of interest" description="Allosteric domain" evidence="1">
    <location>
        <begin position="966"/>
        <end position="1112"/>
    </location>
</feature>
<feature type="binding site" evidence="1">
    <location>
        <position position="134"/>
    </location>
    <ligand>
        <name>ATP</name>
        <dbReference type="ChEBI" id="CHEBI:30616"/>
        <label>1</label>
    </ligand>
</feature>
<feature type="binding site" evidence="1">
    <location>
        <position position="174"/>
    </location>
    <ligand>
        <name>ATP</name>
        <dbReference type="ChEBI" id="CHEBI:30616"/>
        <label>1</label>
    </ligand>
</feature>
<feature type="binding site" evidence="1">
    <location>
        <position position="180"/>
    </location>
    <ligand>
        <name>ATP</name>
        <dbReference type="ChEBI" id="CHEBI:30616"/>
        <label>1</label>
    </ligand>
</feature>
<feature type="binding site" evidence="1">
    <location>
        <position position="181"/>
    </location>
    <ligand>
        <name>ATP</name>
        <dbReference type="ChEBI" id="CHEBI:30616"/>
        <label>1</label>
    </ligand>
</feature>
<feature type="binding site" evidence="1">
    <location>
        <position position="213"/>
    </location>
    <ligand>
        <name>ATP</name>
        <dbReference type="ChEBI" id="CHEBI:30616"/>
        <label>1</label>
    </ligand>
</feature>
<feature type="binding site" evidence="1">
    <location>
        <position position="215"/>
    </location>
    <ligand>
        <name>ATP</name>
        <dbReference type="ChEBI" id="CHEBI:30616"/>
        <label>1</label>
    </ligand>
</feature>
<feature type="binding site" evidence="1">
    <location>
        <position position="220"/>
    </location>
    <ligand>
        <name>ATP</name>
        <dbReference type="ChEBI" id="CHEBI:30616"/>
        <label>1</label>
    </ligand>
</feature>
<feature type="binding site" evidence="1">
    <location>
        <position position="246"/>
    </location>
    <ligand>
        <name>ATP</name>
        <dbReference type="ChEBI" id="CHEBI:30616"/>
        <label>1</label>
    </ligand>
</feature>
<feature type="binding site" evidence="1">
    <location>
        <position position="247"/>
    </location>
    <ligand>
        <name>ATP</name>
        <dbReference type="ChEBI" id="CHEBI:30616"/>
        <label>1</label>
    </ligand>
</feature>
<feature type="binding site" evidence="1">
    <location>
        <position position="248"/>
    </location>
    <ligand>
        <name>ATP</name>
        <dbReference type="ChEBI" id="CHEBI:30616"/>
        <label>1</label>
    </ligand>
</feature>
<feature type="binding site" evidence="1">
    <location>
        <position position="290"/>
    </location>
    <ligand>
        <name>ATP</name>
        <dbReference type="ChEBI" id="CHEBI:30616"/>
        <label>1</label>
    </ligand>
</feature>
<feature type="binding site" evidence="1">
    <location>
        <position position="290"/>
    </location>
    <ligand>
        <name>Mg(2+)</name>
        <dbReference type="ChEBI" id="CHEBI:18420"/>
        <label>1</label>
    </ligand>
</feature>
<feature type="binding site" evidence="1">
    <location>
        <position position="290"/>
    </location>
    <ligand>
        <name>Mn(2+)</name>
        <dbReference type="ChEBI" id="CHEBI:29035"/>
        <label>1</label>
    </ligand>
</feature>
<feature type="binding site" evidence="1">
    <location>
        <position position="304"/>
    </location>
    <ligand>
        <name>ATP</name>
        <dbReference type="ChEBI" id="CHEBI:30616"/>
        <label>1</label>
    </ligand>
</feature>
<feature type="binding site" evidence="1">
    <location>
        <position position="304"/>
    </location>
    <ligand>
        <name>Mg(2+)</name>
        <dbReference type="ChEBI" id="CHEBI:18420"/>
        <label>1</label>
    </ligand>
</feature>
<feature type="binding site" evidence="1">
    <location>
        <position position="304"/>
    </location>
    <ligand>
        <name>Mg(2+)</name>
        <dbReference type="ChEBI" id="CHEBI:18420"/>
        <label>2</label>
    </ligand>
</feature>
<feature type="binding site" evidence="1">
    <location>
        <position position="304"/>
    </location>
    <ligand>
        <name>Mn(2+)</name>
        <dbReference type="ChEBI" id="CHEBI:29035"/>
        <label>1</label>
    </ligand>
</feature>
<feature type="binding site" evidence="1">
    <location>
        <position position="304"/>
    </location>
    <ligand>
        <name>Mn(2+)</name>
        <dbReference type="ChEBI" id="CHEBI:29035"/>
        <label>2</label>
    </ligand>
</feature>
<feature type="binding site" evidence="1">
    <location>
        <position position="306"/>
    </location>
    <ligand>
        <name>Mg(2+)</name>
        <dbReference type="ChEBI" id="CHEBI:18420"/>
        <label>2</label>
    </ligand>
</feature>
<feature type="binding site" evidence="1">
    <location>
        <position position="306"/>
    </location>
    <ligand>
        <name>Mn(2+)</name>
        <dbReference type="ChEBI" id="CHEBI:29035"/>
        <label>2</label>
    </ligand>
</feature>
<feature type="binding site" evidence="1">
    <location>
        <position position="729"/>
    </location>
    <ligand>
        <name>ATP</name>
        <dbReference type="ChEBI" id="CHEBI:30616"/>
        <label>2</label>
    </ligand>
</feature>
<feature type="binding site" evidence="1">
    <location>
        <position position="768"/>
    </location>
    <ligand>
        <name>ATP</name>
        <dbReference type="ChEBI" id="CHEBI:30616"/>
        <label>2</label>
    </ligand>
</feature>
<feature type="binding site" evidence="1">
    <location>
        <position position="770"/>
    </location>
    <ligand>
        <name>ATP</name>
        <dbReference type="ChEBI" id="CHEBI:30616"/>
        <label>2</label>
    </ligand>
</feature>
<feature type="binding site" evidence="1">
    <location>
        <position position="775"/>
    </location>
    <ligand>
        <name>ATP</name>
        <dbReference type="ChEBI" id="CHEBI:30616"/>
        <label>2</label>
    </ligand>
</feature>
<feature type="binding site" evidence="1">
    <location>
        <position position="800"/>
    </location>
    <ligand>
        <name>ATP</name>
        <dbReference type="ChEBI" id="CHEBI:30616"/>
        <label>2</label>
    </ligand>
</feature>
<feature type="binding site" evidence="1">
    <location>
        <position position="801"/>
    </location>
    <ligand>
        <name>ATP</name>
        <dbReference type="ChEBI" id="CHEBI:30616"/>
        <label>2</label>
    </ligand>
</feature>
<feature type="binding site" evidence="1">
    <location>
        <position position="802"/>
    </location>
    <ligand>
        <name>ATP</name>
        <dbReference type="ChEBI" id="CHEBI:30616"/>
        <label>2</label>
    </ligand>
</feature>
<feature type="binding site" evidence="1">
    <location>
        <position position="803"/>
    </location>
    <ligand>
        <name>ATP</name>
        <dbReference type="ChEBI" id="CHEBI:30616"/>
        <label>2</label>
    </ligand>
</feature>
<feature type="binding site" evidence="1">
    <location>
        <position position="843"/>
    </location>
    <ligand>
        <name>ATP</name>
        <dbReference type="ChEBI" id="CHEBI:30616"/>
        <label>2</label>
    </ligand>
</feature>
<feature type="binding site" evidence="1">
    <location>
        <position position="843"/>
    </location>
    <ligand>
        <name>Mg(2+)</name>
        <dbReference type="ChEBI" id="CHEBI:18420"/>
        <label>3</label>
    </ligand>
</feature>
<feature type="binding site" evidence="1">
    <location>
        <position position="843"/>
    </location>
    <ligand>
        <name>Mn(2+)</name>
        <dbReference type="ChEBI" id="CHEBI:29035"/>
        <label>3</label>
    </ligand>
</feature>
<feature type="binding site" evidence="1">
    <location>
        <position position="855"/>
    </location>
    <ligand>
        <name>ATP</name>
        <dbReference type="ChEBI" id="CHEBI:30616"/>
        <label>2</label>
    </ligand>
</feature>
<feature type="binding site" evidence="1">
    <location>
        <position position="855"/>
    </location>
    <ligand>
        <name>Mg(2+)</name>
        <dbReference type="ChEBI" id="CHEBI:18420"/>
        <label>3</label>
    </ligand>
</feature>
<feature type="binding site" evidence="1">
    <location>
        <position position="855"/>
    </location>
    <ligand>
        <name>Mg(2+)</name>
        <dbReference type="ChEBI" id="CHEBI:18420"/>
        <label>4</label>
    </ligand>
</feature>
<feature type="binding site" evidence="1">
    <location>
        <position position="855"/>
    </location>
    <ligand>
        <name>Mn(2+)</name>
        <dbReference type="ChEBI" id="CHEBI:29035"/>
        <label>3</label>
    </ligand>
</feature>
<feature type="binding site" evidence="1">
    <location>
        <position position="855"/>
    </location>
    <ligand>
        <name>Mn(2+)</name>
        <dbReference type="ChEBI" id="CHEBI:29035"/>
        <label>4</label>
    </ligand>
</feature>
<feature type="binding site" evidence="1">
    <location>
        <position position="857"/>
    </location>
    <ligand>
        <name>Mg(2+)</name>
        <dbReference type="ChEBI" id="CHEBI:18420"/>
        <label>4</label>
    </ligand>
</feature>
<feature type="binding site" evidence="1">
    <location>
        <position position="857"/>
    </location>
    <ligand>
        <name>Mn(2+)</name>
        <dbReference type="ChEBI" id="CHEBI:29035"/>
        <label>4</label>
    </ligand>
</feature>
<evidence type="ECO:0000255" key="1">
    <source>
        <dbReference type="HAMAP-Rule" id="MF_01210"/>
    </source>
</evidence>
<protein>
    <recommendedName>
        <fullName evidence="1">Carbamoyl phosphate synthase large chain</fullName>
        <ecNumber evidence="1">6.3.4.16</ecNumber>
        <ecNumber evidence="1">6.3.5.5</ecNumber>
    </recommendedName>
    <alternativeName>
        <fullName evidence="1">Carbamoyl phosphate synthetase ammonia chain</fullName>
    </alternativeName>
</protein>
<sequence length="1112" mass="118976">MPRRTDLRHVLVIGSGPILIGQAAEFDYSGTQACRVLRAEGLTVTLINSNPATIMTDPEYADYTYVEPITPDFVERVIAQQAERGNKIDALLATLGGQTALNTAVALSENGVLERYDVELIGADFDAIQRGEDRQRFKDIVTKVGGESAKSRVCFTMEEVRETVGELGLPVVVRPSFTMGGLGSGMAYSAEDVERMAGHGLASSPSANVLIEESIFGWKEYELELMRDRHDNVVVVCSIENFDPMGVHTGDSVTVAPAMTLTDREYQTMRDLGIAILREVGVATGGCNIQFAVNPKDGRLIVIEMNPRVSRSSALASKATGFPIAKIAAKLAIGYTLDEILNDITKETPACFEPTLDYVVVKAPRFAFEKFPGADATLTTTMKSVGEAMSLGRNFIEALGKVMRSLETGRAGFWTAPDPIATVDEVLENLRTPTDGRLYDIEFALRLGASVEQVAEASGVDPWFVDQIAGLVALRTELLDAPVLDGTLLRRAKNSGLSDRQIAALRPELAGEVGVRALRQRLGIHPVFKTVDTCAAEFEAKTPYHYSSYELDPAAESEVAPQAERPKVLILGSGPNRIGQGIEFDYSCVHAATTLSEAGFETVMINCNPETVSTDYDTADRLYFEPLTFEDVLEIYYAESASGAGGPGVAGVIVQLGGQTPLGLAERLEQAGVPIVGTSPKAIDLAEDRGAFGEVLRTAGLPAPRFGLATTFDQARRIAADIGYPVLVRPSYVLGGRGMEIVYDEQTLEGYITRATQLSPEHPVLVDRFLEDAIEIDVDALCDGTEVYIGGIMEHIEEAGIHSGDSACALPPVTLGRSDIESVRRATEAIAHGVGVVGLLNVQYALKDDVLYVLEANPRASRTVPFVSKATAVPLAKACARIMLGASIAQLREEGVLAATGDGATTARNAPVAVKEAVLPFHRFRKADGAQIDSLLGPEMKSTGEVMGIDHDFGSAFAKSQTAAYGSLPSEGTVFVSVANRDKRSLVFPVKRLADLGFKVLATEGTAEMLRRNGIPCDEVRKHFEEPGAGRPARSAVEAIRAGDVAMVINTPYGNSGPRIDGYEIRSAAVSMNIPCITTVQGASAAVQGIEASLRGDIGVMSLQELHSELGN</sequence>
<reference key="1">
    <citation type="submission" date="2006-06" db="EMBL/GenBank/DDBJ databases">
        <title>Complete sequence of chromosome of Mycobacterium sp. MCS.</title>
        <authorList>
            <consortium name="US DOE Joint Genome Institute"/>
            <person name="Copeland A."/>
            <person name="Lucas S."/>
            <person name="Lapidus A."/>
            <person name="Barry K."/>
            <person name="Detter J.C."/>
            <person name="Glavina del Rio T."/>
            <person name="Hammon N."/>
            <person name="Israni S."/>
            <person name="Dalin E."/>
            <person name="Tice H."/>
            <person name="Pitluck S."/>
            <person name="Martinez M."/>
            <person name="Schmutz J."/>
            <person name="Larimer F."/>
            <person name="Land M."/>
            <person name="Hauser L."/>
            <person name="Kyrpides N."/>
            <person name="Kim E."/>
            <person name="Miller C.D."/>
            <person name="Hughes J.E."/>
            <person name="Anderson A.J."/>
            <person name="Sims R.C."/>
            <person name="Richardson P."/>
        </authorList>
    </citation>
    <scope>NUCLEOTIDE SEQUENCE [LARGE SCALE GENOMIC DNA]</scope>
    <source>
        <strain>MCS</strain>
    </source>
</reference>
<name>CARB_MYCSS</name>
<organism>
    <name type="scientific">Mycobacterium sp. (strain MCS)</name>
    <dbReference type="NCBI Taxonomy" id="164756"/>
    <lineage>
        <taxon>Bacteria</taxon>
        <taxon>Bacillati</taxon>
        <taxon>Actinomycetota</taxon>
        <taxon>Actinomycetes</taxon>
        <taxon>Mycobacteriales</taxon>
        <taxon>Mycobacteriaceae</taxon>
        <taxon>Mycobacterium</taxon>
    </lineage>
</organism>
<keyword id="KW-0028">Amino-acid biosynthesis</keyword>
<keyword id="KW-0055">Arginine biosynthesis</keyword>
<keyword id="KW-0067">ATP-binding</keyword>
<keyword id="KW-0436">Ligase</keyword>
<keyword id="KW-0460">Magnesium</keyword>
<keyword id="KW-0464">Manganese</keyword>
<keyword id="KW-0479">Metal-binding</keyword>
<keyword id="KW-0547">Nucleotide-binding</keyword>
<keyword id="KW-0665">Pyrimidine biosynthesis</keyword>
<keyword id="KW-0677">Repeat</keyword>